<reference key="1">
    <citation type="journal article" date="2006" name="Science">
        <title>Genomic islands and the ecology and evolution of Prochlorococcus.</title>
        <authorList>
            <person name="Coleman M.L."/>
            <person name="Sullivan M.B."/>
            <person name="Martiny A.C."/>
            <person name="Steglich C."/>
            <person name="Barry K."/>
            <person name="Delong E.F."/>
            <person name="Chisholm S.W."/>
        </authorList>
    </citation>
    <scope>NUCLEOTIDE SEQUENCE [LARGE SCALE GENOMIC DNA]</scope>
    <source>
        <strain>MIT 9312</strain>
    </source>
</reference>
<sequence length="395" mass="45180">MAQLETRTEPMVVNFGPHHPSMHGVLRLVVTLDGENVIDCEPVIGYLHRGMEKIAENRTNVMYVPYVSRMDYAAGMFYEAIVVNAPERLANIPVPKRASYIRVLMLELNRIANHLLWLGPFLADVGAQTPFFYIFREREMIYDLWEAATGQRLINNNFFRIGGVACDLPYGWLEKCIDFCDWFGPKIDEYEKLITNNPIFRKRIEGLGTIERDQAINWSLSGPMLRASGVSWDLRKVDSYECYDDFDWQIASEKEGDCYARYRVRVEEMRQSLSIIRQACKMIPGGPTENLEAQRMATEDKKSEIFGIDYQYVAKKVAPTFKIPNGELYTRLESGKGEIGVFIQGNNEVTPWRFKIRAADLNNLQILPHILKGAKIADIMAILGSIDVIMGSVDR</sequence>
<gene>
    <name evidence="1" type="primary">ndhH</name>
    <name type="ordered locus">PMT9312_0174</name>
</gene>
<protein>
    <recommendedName>
        <fullName evidence="1">NAD(P)H-quinone oxidoreductase subunit H</fullName>
        <ecNumber evidence="1">7.1.1.-</ecNumber>
    </recommendedName>
    <alternativeName>
        <fullName>NAD(P)H dehydrogenase subunit H</fullName>
    </alternativeName>
    <alternativeName>
        <fullName evidence="1">NADH-plastoquinone oxidoreductase subunit H</fullName>
    </alternativeName>
    <alternativeName>
        <fullName evidence="1">NDH-1 subunit H</fullName>
        <shortName evidence="1">NDH-H</shortName>
    </alternativeName>
</protein>
<comment type="function">
    <text evidence="1">NDH-1 shuttles electrons from an unknown electron donor, via FMN and iron-sulfur (Fe-S) centers, to quinones in the respiratory and/or the photosynthetic chain. The immediate electron acceptor for the enzyme in this species is believed to be plastoquinone. Couples the redox reaction to proton translocation, and thus conserves the redox energy in a proton gradient. Cyanobacterial NDH-1 also plays a role in inorganic carbon-concentration.</text>
</comment>
<comment type="catalytic activity">
    <reaction evidence="1">
        <text>a plastoquinone + NADH + (n+1) H(+)(in) = a plastoquinol + NAD(+) + n H(+)(out)</text>
        <dbReference type="Rhea" id="RHEA:42608"/>
        <dbReference type="Rhea" id="RHEA-COMP:9561"/>
        <dbReference type="Rhea" id="RHEA-COMP:9562"/>
        <dbReference type="ChEBI" id="CHEBI:15378"/>
        <dbReference type="ChEBI" id="CHEBI:17757"/>
        <dbReference type="ChEBI" id="CHEBI:57540"/>
        <dbReference type="ChEBI" id="CHEBI:57945"/>
        <dbReference type="ChEBI" id="CHEBI:62192"/>
    </reaction>
</comment>
<comment type="catalytic activity">
    <reaction evidence="1">
        <text>a plastoquinone + NADPH + (n+1) H(+)(in) = a plastoquinol + NADP(+) + n H(+)(out)</text>
        <dbReference type="Rhea" id="RHEA:42612"/>
        <dbReference type="Rhea" id="RHEA-COMP:9561"/>
        <dbReference type="Rhea" id="RHEA-COMP:9562"/>
        <dbReference type="ChEBI" id="CHEBI:15378"/>
        <dbReference type="ChEBI" id="CHEBI:17757"/>
        <dbReference type="ChEBI" id="CHEBI:57783"/>
        <dbReference type="ChEBI" id="CHEBI:58349"/>
        <dbReference type="ChEBI" id="CHEBI:62192"/>
    </reaction>
</comment>
<comment type="subunit">
    <text evidence="1">NDH-1 can be composed of about 15 different subunits; different subcomplexes with different compositions have been identified which probably have different functions.</text>
</comment>
<comment type="subcellular location">
    <subcellularLocation>
        <location evidence="1">Cellular thylakoid membrane</location>
        <topology evidence="1">Peripheral membrane protein</topology>
        <orientation evidence="1">Cytoplasmic side</orientation>
    </subcellularLocation>
</comment>
<comment type="similarity">
    <text evidence="1">Belongs to the complex I 49 kDa subunit family.</text>
</comment>
<keyword id="KW-0472">Membrane</keyword>
<keyword id="KW-0520">NAD</keyword>
<keyword id="KW-0521">NADP</keyword>
<keyword id="KW-0618">Plastoquinone</keyword>
<keyword id="KW-0874">Quinone</keyword>
<keyword id="KW-0793">Thylakoid</keyword>
<keyword id="KW-1278">Translocase</keyword>
<keyword id="KW-0813">Transport</keyword>
<accession>Q31D09</accession>
<proteinExistence type="inferred from homology"/>
<dbReference type="EC" id="7.1.1.-" evidence="1"/>
<dbReference type="EMBL" id="CP000111">
    <property type="protein sequence ID" value="ABB49236.1"/>
    <property type="molecule type" value="Genomic_DNA"/>
</dbReference>
<dbReference type="RefSeq" id="WP_011375740.1">
    <property type="nucleotide sequence ID" value="NC_007577.1"/>
</dbReference>
<dbReference type="SMR" id="Q31D09"/>
<dbReference type="STRING" id="74546.PMT9312_0174"/>
<dbReference type="KEGG" id="pmi:PMT9312_0174"/>
<dbReference type="eggNOG" id="COG0649">
    <property type="taxonomic scope" value="Bacteria"/>
</dbReference>
<dbReference type="HOGENOM" id="CLU_015134_1_2_3"/>
<dbReference type="OrthoDB" id="9801496at2"/>
<dbReference type="Proteomes" id="UP000002715">
    <property type="component" value="Chromosome"/>
</dbReference>
<dbReference type="GO" id="GO:0031676">
    <property type="term" value="C:plasma membrane-derived thylakoid membrane"/>
    <property type="evidence" value="ECO:0007669"/>
    <property type="project" value="UniProtKB-SubCell"/>
</dbReference>
<dbReference type="GO" id="GO:0051287">
    <property type="term" value="F:NAD binding"/>
    <property type="evidence" value="ECO:0007669"/>
    <property type="project" value="InterPro"/>
</dbReference>
<dbReference type="GO" id="GO:0016655">
    <property type="term" value="F:oxidoreductase activity, acting on NAD(P)H, quinone or similar compound as acceptor"/>
    <property type="evidence" value="ECO:0007669"/>
    <property type="project" value="UniProtKB-UniRule"/>
</dbReference>
<dbReference type="GO" id="GO:0048038">
    <property type="term" value="F:quinone binding"/>
    <property type="evidence" value="ECO:0007669"/>
    <property type="project" value="UniProtKB-KW"/>
</dbReference>
<dbReference type="GO" id="GO:0019684">
    <property type="term" value="P:photosynthesis, light reaction"/>
    <property type="evidence" value="ECO:0007669"/>
    <property type="project" value="UniProtKB-UniRule"/>
</dbReference>
<dbReference type="Gene3D" id="1.10.645.10">
    <property type="entry name" value="Cytochrome-c3 Hydrogenase, chain B"/>
    <property type="match status" value="1"/>
</dbReference>
<dbReference type="HAMAP" id="MF_01358">
    <property type="entry name" value="NDH1_NuoD"/>
    <property type="match status" value="1"/>
</dbReference>
<dbReference type="InterPro" id="IPR001135">
    <property type="entry name" value="NADH_Q_OxRdtase_suD"/>
</dbReference>
<dbReference type="InterPro" id="IPR014029">
    <property type="entry name" value="NADH_UbQ_OxRdtase_49kDa_CS"/>
</dbReference>
<dbReference type="InterPro" id="IPR022885">
    <property type="entry name" value="NDH1_su_D/H"/>
</dbReference>
<dbReference type="InterPro" id="IPR029014">
    <property type="entry name" value="NiFe-Hase_large"/>
</dbReference>
<dbReference type="NCBIfam" id="NF004739">
    <property type="entry name" value="PRK06075.1"/>
    <property type="match status" value="1"/>
</dbReference>
<dbReference type="NCBIfam" id="NF005649">
    <property type="entry name" value="PRK07415.1"/>
    <property type="match status" value="1"/>
</dbReference>
<dbReference type="PANTHER" id="PTHR11993:SF10">
    <property type="entry name" value="NADH DEHYDROGENASE [UBIQUINONE] IRON-SULFUR PROTEIN 2, MITOCHONDRIAL"/>
    <property type="match status" value="1"/>
</dbReference>
<dbReference type="PANTHER" id="PTHR11993">
    <property type="entry name" value="NADH-UBIQUINONE OXIDOREDUCTASE 49 KDA SUBUNIT"/>
    <property type="match status" value="1"/>
</dbReference>
<dbReference type="Pfam" id="PF00346">
    <property type="entry name" value="Complex1_49kDa"/>
    <property type="match status" value="1"/>
</dbReference>
<dbReference type="SUPFAM" id="SSF56762">
    <property type="entry name" value="HydB/Nqo4-like"/>
    <property type="match status" value="1"/>
</dbReference>
<dbReference type="PROSITE" id="PS00535">
    <property type="entry name" value="COMPLEX1_49K"/>
    <property type="match status" value="1"/>
</dbReference>
<evidence type="ECO:0000255" key="1">
    <source>
        <dbReference type="HAMAP-Rule" id="MF_01358"/>
    </source>
</evidence>
<organism>
    <name type="scientific">Prochlorococcus marinus (strain MIT 9312)</name>
    <dbReference type="NCBI Taxonomy" id="74546"/>
    <lineage>
        <taxon>Bacteria</taxon>
        <taxon>Bacillati</taxon>
        <taxon>Cyanobacteriota</taxon>
        <taxon>Cyanophyceae</taxon>
        <taxon>Synechococcales</taxon>
        <taxon>Prochlorococcaceae</taxon>
        <taxon>Prochlorococcus</taxon>
    </lineage>
</organism>
<name>NDHH_PROM9</name>
<feature type="chain" id="PRO_0000371911" description="NAD(P)H-quinone oxidoreductase subunit H">
    <location>
        <begin position="1"/>
        <end position="395"/>
    </location>
</feature>